<comment type="function">
    <text evidence="1">Transport of potassium into the cell. Likely operates as a K(+):H(+) symporter.</text>
</comment>
<comment type="catalytic activity">
    <reaction evidence="1">
        <text>K(+)(in) + H(+)(in) = K(+)(out) + H(+)(out)</text>
        <dbReference type="Rhea" id="RHEA:28490"/>
        <dbReference type="ChEBI" id="CHEBI:15378"/>
        <dbReference type="ChEBI" id="CHEBI:29103"/>
    </reaction>
    <physiologicalReaction direction="right-to-left" evidence="1">
        <dbReference type="Rhea" id="RHEA:28492"/>
    </physiologicalReaction>
</comment>
<comment type="subcellular location">
    <subcellularLocation>
        <location evidence="1">Cell inner membrane</location>
        <topology evidence="1">Multi-pass membrane protein</topology>
    </subcellularLocation>
</comment>
<comment type="similarity">
    <text evidence="1">Belongs to the HAK/KUP transporter (TC 2.A.72) family.</text>
</comment>
<organism>
    <name type="scientific">Xanthobacter autotrophicus (strain ATCC BAA-1158 / Py2)</name>
    <dbReference type="NCBI Taxonomy" id="78245"/>
    <lineage>
        <taxon>Bacteria</taxon>
        <taxon>Pseudomonadati</taxon>
        <taxon>Pseudomonadota</taxon>
        <taxon>Alphaproteobacteria</taxon>
        <taxon>Hyphomicrobiales</taxon>
        <taxon>Xanthobacteraceae</taxon>
        <taxon>Xanthobacter</taxon>
    </lineage>
</organism>
<evidence type="ECO:0000255" key="1">
    <source>
        <dbReference type="HAMAP-Rule" id="MF_01522"/>
    </source>
</evidence>
<dbReference type="EMBL" id="CP000781">
    <property type="protein sequence ID" value="ABS65444.1"/>
    <property type="molecule type" value="Genomic_DNA"/>
</dbReference>
<dbReference type="SMR" id="A7IBQ1"/>
<dbReference type="STRING" id="78245.Xaut_0185"/>
<dbReference type="KEGG" id="xau:Xaut_0185"/>
<dbReference type="eggNOG" id="COG3158">
    <property type="taxonomic scope" value="Bacteria"/>
</dbReference>
<dbReference type="HOGENOM" id="CLU_008142_4_2_5"/>
<dbReference type="PhylomeDB" id="A7IBQ1"/>
<dbReference type="Proteomes" id="UP000002417">
    <property type="component" value="Chromosome"/>
</dbReference>
<dbReference type="GO" id="GO:0005886">
    <property type="term" value="C:plasma membrane"/>
    <property type="evidence" value="ECO:0007669"/>
    <property type="project" value="UniProtKB-SubCell"/>
</dbReference>
<dbReference type="GO" id="GO:0015079">
    <property type="term" value="F:potassium ion transmembrane transporter activity"/>
    <property type="evidence" value="ECO:0007669"/>
    <property type="project" value="UniProtKB-UniRule"/>
</dbReference>
<dbReference type="GO" id="GO:0015293">
    <property type="term" value="F:symporter activity"/>
    <property type="evidence" value="ECO:0007669"/>
    <property type="project" value="UniProtKB-UniRule"/>
</dbReference>
<dbReference type="HAMAP" id="MF_01522">
    <property type="entry name" value="Kup"/>
    <property type="match status" value="1"/>
</dbReference>
<dbReference type="InterPro" id="IPR003855">
    <property type="entry name" value="K+_transporter"/>
</dbReference>
<dbReference type="InterPro" id="IPR053952">
    <property type="entry name" value="K_trans_C"/>
</dbReference>
<dbReference type="InterPro" id="IPR053951">
    <property type="entry name" value="K_trans_N"/>
</dbReference>
<dbReference type="InterPro" id="IPR023051">
    <property type="entry name" value="Kup"/>
</dbReference>
<dbReference type="PANTHER" id="PTHR30540:SF79">
    <property type="entry name" value="LOW AFFINITY POTASSIUM TRANSPORT SYSTEM PROTEIN KUP"/>
    <property type="match status" value="1"/>
</dbReference>
<dbReference type="PANTHER" id="PTHR30540">
    <property type="entry name" value="OSMOTIC STRESS POTASSIUM TRANSPORTER"/>
    <property type="match status" value="1"/>
</dbReference>
<dbReference type="Pfam" id="PF02705">
    <property type="entry name" value="K_trans"/>
    <property type="match status" value="1"/>
</dbReference>
<dbReference type="Pfam" id="PF22776">
    <property type="entry name" value="K_trans_C"/>
    <property type="match status" value="1"/>
</dbReference>
<accession>A7IBQ1</accession>
<name>KUP_XANP2</name>
<feature type="chain" id="PRO_1000190287" description="Probable potassium transport system protein Kup">
    <location>
        <begin position="1"/>
        <end position="628"/>
    </location>
</feature>
<feature type="transmembrane region" description="Helical" evidence="1">
    <location>
        <begin position="15"/>
        <end position="35"/>
    </location>
</feature>
<feature type="transmembrane region" description="Helical" evidence="1">
    <location>
        <begin position="49"/>
        <end position="69"/>
    </location>
</feature>
<feature type="transmembrane region" description="Helical" evidence="1">
    <location>
        <begin position="106"/>
        <end position="126"/>
    </location>
</feature>
<feature type="transmembrane region" description="Helical" evidence="1">
    <location>
        <begin position="141"/>
        <end position="161"/>
    </location>
</feature>
<feature type="transmembrane region" description="Helical" evidence="1">
    <location>
        <begin position="174"/>
        <end position="194"/>
    </location>
</feature>
<feature type="transmembrane region" description="Helical" evidence="1">
    <location>
        <begin position="210"/>
        <end position="230"/>
    </location>
</feature>
<feature type="transmembrane region" description="Helical" evidence="1">
    <location>
        <begin position="254"/>
        <end position="274"/>
    </location>
</feature>
<feature type="transmembrane region" description="Helical" evidence="1">
    <location>
        <begin position="295"/>
        <end position="315"/>
    </location>
</feature>
<feature type="transmembrane region" description="Helical" evidence="1">
    <location>
        <begin position="343"/>
        <end position="363"/>
    </location>
</feature>
<feature type="transmembrane region" description="Helical" evidence="1">
    <location>
        <begin position="369"/>
        <end position="389"/>
    </location>
</feature>
<feature type="transmembrane region" description="Helical" evidence="1">
    <location>
        <begin position="398"/>
        <end position="418"/>
    </location>
</feature>
<feature type="transmembrane region" description="Helical" evidence="1">
    <location>
        <begin position="425"/>
        <end position="445"/>
    </location>
</feature>
<sequence>MALSFSRDRTRPLPFAAEIGALGVVFGDIGTSPLYALKQGVLAVGGTNFLGGDVLGLLSLITWSIILSVTVKYVMLVLRADNDGEGGILALVTLLDLHRSALGMRWYLLAAGLLGAAMLIGDGVLTPAMSVLSAIEGLQVISPELEHWVVTLTVLVLLAVFLSQRLGTERIASFFGPIMLMWFGSLGALGVYGILQAPQVLAGLDPRYGIMLMVNHPGLAGVILGACFLAVTGGEALYADLGHFGRPVIARAWLFVAMPALLLNYFGQGAILLVDPNAVRNPFYDLCPDVFDIPLLFLATAATVIASQSIITGVFSLAKQAIELGYLPPMRIRYTSEHNEQHIYVGRLNWLLMIACIAVVLGFEASDRLASAYGIAVAFAMVTTSILFIAQVHRSWGWPAPAVWAMATGLLTIDFAFASANMTKIHDGGWLPLSIAAAIIFVMVSWRRGLEGVVAQQVRFTEPLDSFVARKDRVNDVEAPRTAIFLSRAGAMTPVALSRMADLLKVRFEKAVIVSVWIAARPRVSVEDRVKVTTLNEGFVRVDLRFGYMQQIDVPSVLGPALSARGIDPDAAIYVIGHERIIPPDEVTKIKDVVAHVFAFLARNAERSVDRFGLPRARTVEIGYPVKL</sequence>
<proteinExistence type="inferred from homology"/>
<reference key="1">
    <citation type="submission" date="2007-07" db="EMBL/GenBank/DDBJ databases">
        <title>Complete sequence of chromosome of Xanthobacter autotrophicus Py2.</title>
        <authorList>
            <consortium name="US DOE Joint Genome Institute"/>
            <person name="Copeland A."/>
            <person name="Lucas S."/>
            <person name="Lapidus A."/>
            <person name="Barry K."/>
            <person name="Glavina del Rio T."/>
            <person name="Hammon N."/>
            <person name="Israni S."/>
            <person name="Dalin E."/>
            <person name="Tice H."/>
            <person name="Pitluck S."/>
            <person name="Sims D."/>
            <person name="Brettin T."/>
            <person name="Bruce D."/>
            <person name="Detter J.C."/>
            <person name="Han C."/>
            <person name="Tapia R."/>
            <person name="Brainard J."/>
            <person name="Schmutz J."/>
            <person name="Larimer F."/>
            <person name="Land M."/>
            <person name="Hauser L."/>
            <person name="Kyrpides N."/>
            <person name="Kim E."/>
            <person name="Ensigns S.A."/>
            <person name="Richardson P."/>
        </authorList>
    </citation>
    <scope>NUCLEOTIDE SEQUENCE [LARGE SCALE GENOMIC DNA]</scope>
    <source>
        <strain>ATCC BAA-1158 / Py2</strain>
    </source>
</reference>
<gene>
    <name evidence="1" type="primary">kup</name>
    <name type="ordered locus">Xaut_0185</name>
</gene>
<keyword id="KW-0997">Cell inner membrane</keyword>
<keyword id="KW-1003">Cell membrane</keyword>
<keyword id="KW-0406">Ion transport</keyword>
<keyword id="KW-0472">Membrane</keyword>
<keyword id="KW-0630">Potassium</keyword>
<keyword id="KW-0633">Potassium transport</keyword>
<keyword id="KW-1185">Reference proteome</keyword>
<keyword id="KW-0769">Symport</keyword>
<keyword id="KW-0812">Transmembrane</keyword>
<keyword id="KW-1133">Transmembrane helix</keyword>
<keyword id="KW-0813">Transport</keyword>
<protein>
    <recommendedName>
        <fullName evidence="1">Probable potassium transport system protein Kup</fullName>
    </recommendedName>
</protein>